<feature type="chain" id="PRO_0000270806" description="Heat stress transcription factor A-5">
    <location>
        <begin position="1"/>
        <end position="466"/>
    </location>
</feature>
<feature type="DNA-binding region" evidence="1">
    <location>
        <begin position="21"/>
        <end position="115"/>
    </location>
</feature>
<feature type="region of interest" description="Hydrophobic repeat HR-A/B">
    <location>
        <begin position="125"/>
        <end position="191"/>
    </location>
</feature>
<feature type="region of interest" description="Disordered" evidence="3">
    <location>
        <begin position="215"/>
        <end position="248"/>
    </location>
</feature>
<feature type="region of interest" description="Disordered" evidence="3">
    <location>
        <begin position="272"/>
        <end position="300"/>
    </location>
</feature>
<feature type="region of interest" description="Disordered" evidence="3">
    <location>
        <begin position="422"/>
        <end position="466"/>
    </location>
</feature>
<feature type="short sequence motif" description="Bipartite nuclear localization signal" evidence="2">
    <location>
        <begin position="198"/>
        <end position="217"/>
    </location>
</feature>
<feature type="short sequence motif" description="AHA">
    <location>
        <begin position="414"/>
        <end position="423"/>
    </location>
</feature>
<feature type="short sequence motif" description="Nuclear export signal" evidence="2">
    <location>
        <begin position="461"/>
        <end position="466"/>
    </location>
</feature>
<feature type="compositionally biased region" description="Basic and acidic residues" evidence="3">
    <location>
        <begin position="218"/>
        <end position="233"/>
    </location>
</feature>
<feature type="compositionally biased region" description="Polar residues" evidence="3">
    <location>
        <begin position="425"/>
        <end position="438"/>
    </location>
</feature>
<feature type="compositionally biased region" description="Polar residues" evidence="3">
    <location>
        <begin position="455"/>
        <end position="466"/>
    </location>
</feature>
<gene>
    <name type="primary">HSFA5</name>
    <name type="synonym">HSF12</name>
    <name type="ordered locus">At4g13980</name>
    <name type="ORF">dl3030c</name>
    <name type="ORF">FCAALL.27</name>
</gene>
<keyword id="KW-0010">Activator</keyword>
<keyword id="KW-0963">Cytoplasm</keyword>
<keyword id="KW-0238">DNA-binding</keyword>
<keyword id="KW-0539">Nucleus</keyword>
<keyword id="KW-0597">Phosphoprotein</keyword>
<keyword id="KW-1185">Reference proteome</keyword>
<keyword id="KW-0346">Stress response</keyword>
<keyword id="KW-0804">Transcription</keyword>
<keyword id="KW-0805">Transcription regulation</keyword>
<dbReference type="EMBL" id="Z97335">
    <property type="protein sequence ID" value="CAB10177.1"/>
    <property type="status" value="ALT_SEQ"/>
    <property type="molecule type" value="Genomic_DNA"/>
</dbReference>
<dbReference type="EMBL" id="AL161537">
    <property type="protein sequence ID" value="CAB78440.1"/>
    <property type="status" value="ALT_SEQ"/>
    <property type="molecule type" value="Genomic_DNA"/>
</dbReference>
<dbReference type="EMBL" id="CP002687">
    <property type="protein sequence ID" value="AEE83355.1"/>
    <property type="molecule type" value="Genomic_DNA"/>
</dbReference>
<dbReference type="EMBL" id="AY039528">
    <property type="protein sequence ID" value="AAK62584.1"/>
    <property type="molecule type" value="mRNA"/>
</dbReference>
<dbReference type="EMBL" id="BT001056">
    <property type="protein sequence ID" value="AAN46810.1"/>
    <property type="molecule type" value="mRNA"/>
</dbReference>
<dbReference type="EMBL" id="AK221877">
    <property type="protein sequence ID" value="BAD94194.1"/>
    <property type="molecule type" value="mRNA"/>
</dbReference>
<dbReference type="PIR" id="G71400">
    <property type="entry name" value="G71400"/>
</dbReference>
<dbReference type="RefSeq" id="NP_567415.1">
    <property type="nucleotide sequence ID" value="NM_117472.4"/>
</dbReference>
<dbReference type="SMR" id="Q94BZ5"/>
<dbReference type="BioGRID" id="12330">
    <property type="interactions" value="4"/>
</dbReference>
<dbReference type="FunCoup" id="Q94BZ5">
    <property type="interactions" value="270"/>
</dbReference>
<dbReference type="IntAct" id="Q94BZ5">
    <property type="interactions" value="4"/>
</dbReference>
<dbReference type="STRING" id="3702.Q94BZ5"/>
<dbReference type="iPTMnet" id="Q94BZ5"/>
<dbReference type="PaxDb" id="3702-AT4G13980.1"/>
<dbReference type="ProteomicsDB" id="230151"/>
<dbReference type="EnsemblPlants" id="AT4G13980.1">
    <property type="protein sequence ID" value="AT4G13980.1"/>
    <property type="gene ID" value="AT4G13980"/>
</dbReference>
<dbReference type="GeneID" id="827033"/>
<dbReference type="Gramene" id="AT4G13980.1">
    <property type="protein sequence ID" value="AT4G13980.1"/>
    <property type="gene ID" value="AT4G13980"/>
</dbReference>
<dbReference type="KEGG" id="ath:AT4G13980"/>
<dbReference type="Araport" id="AT4G13980"/>
<dbReference type="TAIR" id="AT4G13980">
    <property type="gene designation" value="AT-HSFA5"/>
</dbReference>
<dbReference type="eggNOG" id="KOG0627">
    <property type="taxonomic scope" value="Eukaryota"/>
</dbReference>
<dbReference type="HOGENOM" id="CLU_030308_0_0_1"/>
<dbReference type="InParanoid" id="Q94BZ5"/>
<dbReference type="OMA" id="MPQIGQE"/>
<dbReference type="PhylomeDB" id="Q94BZ5"/>
<dbReference type="PRO" id="PR:Q94BZ5"/>
<dbReference type="Proteomes" id="UP000006548">
    <property type="component" value="Chromosome 4"/>
</dbReference>
<dbReference type="ExpressionAtlas" id="Q94BZ5">
    <property type="expression patterns" value="baseline and differential"/>
</dbReference>
<dbReference type="GO" id="GO:0005737">
    <property type="term" value="C:cytoplasm"/>
    <property type="evidence" value="ECO:0007669"/>
    <property type="project" value="UniProtKB-SubCell"/>
</dbReference>
<dbReference type="GO" id="GO:0005634">
    <property type="term" value="C:nucleus"/>
    <property type="evidence" value="ECO:0007669"/>
    <property type="project" value="UniProtKB-SubCell"/>
</dbReference>
<dbReference type="GO" id="GO:0003700">
    <property type="term" value="F:DNA-binding transcription factor activity"/>
    <property type="evidence" value="ECO:0000250"/>
    <property type="project" value="TAIR"/>
</dbReference>
<dbReference type="GO" id="GO:0043565">
    <property type="term" value="F:sequence-specific DNA binding"/>
    <property type="evidence" value="ECO:0007669"/>
    <property type="project" value="InterPro"/>
</dbReference>
<dbReference type="FunFam" id="1.10.10.10:FF:000057">
    <property type="entry name" value="Heat shock transcription factor 1"/>
    <property type="match status" value="1"/>
</dbReference>
<dbReference type="Gene3D" id="1.10.10.10">
    <property type="entry name" value="Winged helix-like DNA-binding domain superfamily/Winged helix DNA-binding domain"/>
    <property type="match status" value="1"/>
</dbReference>
<dbReference type="InterPro" id="IPR000232">
    <property type="entry name" value="HSF_DNA-bd"/>
</dbReference>
<dbReference type="InterPro" id="IPR036388">
    <property type="entry name" value="WH-like_DNA-bd_sf"/>
</dbReference>
<dbReference type="InterPro" id="IPR036390">
    <property type="entry name" value="WH_DNA-bd_sf"/>
</dbReference>
<dbReference type="PANTHER" id="PTHR10015">
    <property type="entry name" value="HEAT SHOCK TRANSCRIPTION FACTOR"/>
    <property type="match status" value="1"/>
</dbReference>
<dbReference type="PANTHER" id="PTHR10015:SF377">
    <property type="entry name" value="HEAT STRESS TRANSCRIPTION FACTOR A-5"/>
    <property type="match status" value="1"/>
</dbReference>
<dbReference type="Pfam" id="PF00447">
    <property type="entry name" value="HSF_DNA-bind"/>
    <property type="match status" value="1"/>
</dbReference>
<dbReference type="PRINTS" id="PR00056">
    <property type="entry name" value="HSFDOMAIN"/>
</dbReference>
<dbReference type="SMART" id="SM00415">
    <property type="entry name" value="HSF"/>
    <property type="match status" value="1"/>
</dbReference>
<dbReference type="SUPFAM" id="SSF46785">
    <property type="entry name" value="Winged helix' DNA-binding domain"/>
    <property type="match status" value="1"/>
</dbReference>
<dbReference type="PROSITE" id="PS00434">
    <property type="entry name" value="HSF_DOMAIN"/>
    <property type="match status" value="1"/>
</dbReference>
<accession>Q94BZ5</accession>
<accession>O23259</accession>
<accession>Q56X02</accession>
<proteinExistence type="evidence at transcript level"/>
<name>HSFA5_ARATH</name>
<protein>
    <recommendedName>
        <fullName>Heat stress transcription factor A-5</fullName>
        <shortName>AtHsfA5</shortName>
    </recommendedName>
    <alternativeName>
        <fullName>AtHsf-12</fullName>
    </alternativeName>
</protein>
<comment type="function">
    <text>Transcriptional activator that specifically binds DNA sequence 5'-AGAAnnTTCT-3' known as heat shock promoter elements (HSE).</text>
</comment>
<comment type="subunit">
    <text evidence="1">Homotrimer.</text>
</comment>
<comment type="subcellular location">
    <subcellularLocation>
        <location evidence="5">Cytoplasm</location>
    </subcellularLocation>
    <subcellularLocation>
        <location evidence="5">Nucleus</location>
    </subcellularLocation>
</comment>
<comment type="domain">
    <text evidence="4">The hydrophobic-rich region (HR-A/B) corresponds to the oligomerization domain. AHA motif is a transcriptional activator element.</text>
</comment>
<comment type="PTM">
    <text evidence="1">Exhibits temperature-dependent phosphorylation.</text>
</comment>
<comment type="similarity">
    <text evidence="5">Belongs to the HSF family. Class A subfamily.</text>
</comment>
<comment type="sequence caution" evidence="5">
    <conflict type="erroneous gene model prediction">
        <sequence resource="EMBL-CDS" id="CAB10177"/>
    </conflict>
    <text>The predicted gene At4g13980 has been split into 2 genes: At4g13980 and At4g13985.</text>
</comment>
<comment type="sequence caution" evidence="5">
    <conflict type="erroneous gene model prediction">
        <sequence resource="EMBL-CDS" id="CAB78440"/>
    </conflict>
    <text>The predicted gene At4g13980 has been split into 2 genes: At4g13980 and At4g13985.</text>
</comment>
<reference key="1">
    <citation type="journal article" date="1998" name="Nature">
        <title>Analysis of 1.9 Mb of contiguous sequence from chromosome 4 of Arabidopsis thaliana.</title>
        <authorList>
            <person name="Bevan M."/>
            <person name="Bancroft I."/>
            <person name="Bent E."/>
            <person name="Love K."/>
            <person name="Goodman H.M."/>
            <person name="Dean C."/>
            <person name="Bergkamp R."/>
            <person name="Dirkse W."/>
            <person name="van Staveren M."/>
            <person name="Stiekema W."/>
            <person name="Drost L."/>
            <person name="Ridley P."/>
            <person name="Hudson S.-A."/>
            <person name="Patel K."/>
            <person name="Murphy G."/>
            <person name="Piffanelli P."/>
            <person name="Wedler H."/>
            <person name="Wedler E."/>
            <person name="Wambutt R."/>
            <person name="Weitzenegger T."/>
            <person name="Pohl T."/>
            <person name="Terryn N."/>
            <person name="Gielen J."/>
            <person name="Villarroel R."/>
            <person name="De Clercq R."/>
            <person name="van Montagu M."/>
            <person name="Lecharny A."/>
            <person name="Aubourg S."/>
            <person name="Gy I."/>
            <person name="Kreis M."/>
            <person name="Lao N."/>
            <person name="Kavanagh T."/>
            <person name="Hempel S."/>
            <person name="Kotter P."/>
            <person name="Entian K.-D."/>
            <person name="Rieger M."/>
            <person name="Schaefer M."/>
            <person name="Funk B."/>
            <person name="Mueller-Auer S."/>
            <person name="Silvey M."/>
            <person name="James R."/>
            <person name="Monfort A."/>
            <person name="Pons A."/>
            <person name="Puigdomenech P."/>
            <person name="Douka A."/>
            <person name="Voukelatou E."/>
            <person name="Milioni D."/>
            <person name="Hatzopoulos P."/>
            <person name="Piravandi E."/>
            <person name="Obermaier B."/>
            <person name="Hilbert H."/>
            <person name="Duesterhoeft A."/>
            <person name="Moores T."/>
            <person name="Jones J.D.G."/>
            <person name="Eneva T."/>
            <person name="Palme K."/>
            <person name="Benes V."/>
            <person name="Rechmann S."/>
            <person name="Ansorge W."/>
            <person name="Cooke R."/>
            <person name="Berger C."/>
            <person name="Delseny M."/>
            <person name="Voet M."/>
            <person name="Volckaert G."/>
            <person name="Mewes H.-W."/>
            <person name="Klosterman S."/>
            <person name="Schueller C."/>
            <person name="Chalwatzis N."/>
        </authorList>
    </citation>
    <scope>NUCLEOTIDE SEQUENCE [LARGE SCALE GENOMIC DNA]</scope>
    <source>
        <strain>cv. Columbia</strain>
    </source>
</reference>
<reference key="2">
    <citation type="journal article" date="1999" name="Nature">
        <title>Sequence and analysis of chromosome 4 of the plant Arabidopsis thaliana.</title>
        <authorList>
            <person name="Mayer K.F.X."/>
            <person name="Schueller C."/>
            <person name="Wambutt R."/>
            <person name="Murphy G."/>
            <person name="Volckaert G."/>
            <person name="Pohl T."/>
            <person name="Duesterhoeft A."/>
            <person name="Stiekema W."/>
            <person name="Entian K.-D."/>
            <person name="Terryn N."/>
            <person name="Harris B."/>
            <person name="Ansorge W."/>
            <person name="Brandt P."/>
            <person name="Grivell L.A."/>
            <person name="Rieger M."/>
            <person name="Weichselgartner M."/>
            <person name="de Simone V."/>
            <person name="Obermaier B."/>
            <person name="Mache R."/>
            <person name="Mueller M."/>
            <person name="Kreis M."/>
            <person name="Delseny M."/>
            <person name="Puigdomenech P."/>
            <person name="Watson M."/>
            <person name="Schmidtheini T."/>
            <person name="Reichert B."/>
            <person name="Portetelle D."/>
            <person name="Perez-Alonso M."/>
            <person name="Boutry M."/>
            <person name="Bancroft I."/>
            <person name="Vos P."/>
            <person name="Hoheisel J."/>
            <person name="Zimmermann W."/>
            <person name="Wedler H."/>
            <person name="Ridley P."/>
            <person name="Langham S.-A."/>
            <person name="McCullagh B."/>
            <person name="Bilham L."/>
            <person name="Robben J."/>
            <person name="van der Schueren J."/>
            <person name="Grymonprez B."/>
            <person name="Chuang Y.-J."/>
            <person name="Vandenbussche F."/>
            <person name="Braeken M."/>
            <person name="Weltjens I."/>
            <person name="Voet M."/>
            <person name="Bastiaens I."/>
            <person name="Aert R."/>
            <person name="Defoor E."/>
            <person name="Weitzenegger T."/>
            <person name="Bothe G."/>
            <person name="Ramsperger U."/>
            <person name="Hilbert H."/>
            <person name="Braun M."/>
            <person name="Holzer E."/>
            <person name="Brandt A."/>
            <person name="Peters S."/>
            <person name="van Staveren M."/>
            <person name="Dirkse W."/>
            <person name="Mooijman P."/>
            <person name="Klein Lankhorst R."/>
            <person name="Rose M."/>
            <person name="Hauf J."/>
            <person name="Koetter P."/>
            <person name="Berneiser S."/>
            <person name="Hempel S."/>
            <person name="Feldpausch M."/>
            <person name="Lamberth S."/>
            <person name="Van den Daele H."/>
            <person name="De Keyser A."/>
            <person name="Buysshaert C."/>
            <person name="Gielen J."/>
            <person name="Villarroel R."/>
            <person name="De Clercq R."/>
            <person name="van Montagu M."/>
            <person name="Rogers J."/>
            <person name="Cronin A."/>
            <person name="Quail M.A."/>
            <person name="Bray-Allen S."/>
            <person name="Clark L."/>
            <person name="Doggett J."/>
            <person name="Hall S."/>
            <person name="Kay M."/>
            <person name="Lennard N."/>
            <person name="McLay K."/>
            <person name="Mayes R."/>
            <person name="Pettett A."/>
            <person name="Rajandream M.A."/>
            <person name="Lyne M."/>
            <person name="Benes V."/>
            <person name="Rechmann S."/>
            <person name="Borkova D."/>
            <person name="Bloecker H."/>
            <person name="Scharfe M."/>
            <person name="Grimm M."/>
            <person name="Loehnert T.-H."/>
            <person name="Dose S."/>
            <person name="de Haan M."/>
            <person name="Maarse A.C."/>
            <person name="Schaefer M."/>
            <person name="Mueller-Auer S."/>
            <person name="Gabel C."/>
            <person name="Fuchs M."/>
            <person name="Fartmann B."/>
            <person name="Granderath K."/>
            <person name="Dauner D."/>
            <person name="Herzl A."/>
            <person name="Neumann S."/>
            <person name="Argiriou A."/>
            <person name="Vitale D."/>
            <person name="Liguori R."/>
            <person name="Piravandi E."/>
            <person name="Massenet O."/>
            <person name="Quigley F."/>
            <person name="Clabauld G."/>
            <person name="Muendlein A."/>
            <person name="Felber R."/>
            <person name="Schnabl S."/>
            <person name="Hiller R."/>
            <person name="Schmidt W."/>
            <person name="Lecharny A."/>
            <person name="Aubourg S."/>
            <person name="Chefdor F."/>
            <person name="Cooke R."/>
            <person name="Berger C."/>
            <person name="Monfort A."/>
            <person name="Casacuberta E."/>
            <person name="Gibbons T."/>
            <person name="Weber N."/>
            <person name="Vandenbol M."/>
            <person name="Bargues M."/>
            <person name="Terol J."/>
            <person name="Torres A."/>
            <person name="Perez-Perez A."/>
            <person name="Purnelle B."/>
            <person name="Bent E."/>
            <person name="Johnson S."/>
            <person name="Tacon D."/>
            <person name="Jesse T."/>
            <person name="Heijnen L."/>
            <person name="Schwarz S."/>
            <person name="Scholler P."/>
            <person name="Heber S."/>
            <person name="Francs P."/>
            <person name="Bielke C."/>
            <person name="Frishman D."/>
            <person name="Haase D."/>
            <person name="Lemcke K."/>
            <person name="Mewes H.-W."/>
            <person name="Stocker S."/>
            <person name="Zaccaria P."/>
            <person name="Bevan M."/>
            <person name="Wilson R.K."/>
            <person name="de la Bastide M."/>
            <person name="Habermann K."/>
            <person name="Parnell L."/>
            <person name="Dedhia N."/>
            <person name="Gnoj L."/>
            <person name="Schutz K."/>
            <person name="Huang E."/>
            <person name="Spiegel L."/>
            <person name="Sekhon M."/>
            <person name="Murray J."/>
            <person name="Sheet P."/>
            <person name="Cordes M."/>
            <person name="Abu-Threideh J."/>
            <person name="Stoneking T."/>
            <person name="Kalicki J."/>
            <person name="Graves T."/>
            <person name="Harmon G."/>
            <person name="Edwards J."/>
            <person name="Latreille P."/>
            <person name="Courtney L."/>
            <person name="Cloud J."/>
            <person name="Abbott A."/>
            <person name="Scott K."/>
            <person name="Johnson D."/>
            <person name="Minx P."/>
            <person name="Bentley D."/>
            <person name="Fulton B."/>
            <person name="Miller N."/>
            <person name="Greco T."/>
            <person name="Kemp K."/>
            <person name="Kramer J."/>
            <person name="Fulton L."/>
            <person name="Mardis E."/>
            <person name="Dante M."/>
            <person name="Pepin K."/>
            <person name="Hillier L.W."/>
            <person name="Nelson J."/>
            <person name="Spieth J."/>
            <person name="Ryan E."/>
            <person name="Andrews S."/>
            <person name="Geisel C."/>
            <person name="Layman D."/>
            <person name="Du H."/>
            <person name="Ali J."/>
            <person name="Berghoff A."/>
            <person name="Jones K."/>
            <person name="Drone K."/>
            <person name="Cotton M."/>
            <person name="Joshu C."/>
            <person name="Antonoiu B."/>
            <person name="Zidanic M."/>
            <person name="Strong C."/>
            <person name="Sun H."/>
            <person name="Lamar B."/>
            <person name="Yordan C."/>
            <person name="Ma P."/>
            <person name="Zhong J."/>
            <person name="Preston R."/>
            <person name="Vil D."/>
            <person name="Shekher M."/>
            <person name="Matero A."/>
            <person name="Shah R."/>
            <person name="Swaby I.K."/>
            <person name="O'Shaughnessy A."/>
            <person name="Rodriguez M."/>
            <person name="Hoffman J."/>
            <person name="Till S."/>
            <person name="Granat S."/>
            <person name="Shohdy N."/>
            <person name="Hasegawa A."/>
            <person name="Hameed A."/>
            <person name="Lodhi M."/>
            <person name="Johnson A."/>
            <person name="Chen E."/>
            <person name="Marra M.A."/>
            <person name="Martienssen R."/>
            <person name="McCombie W.R."/>
        </authorList>
    </citation>
    <scope>NUCLEOTIDE SEQUENCE [LARGE SCALE GENOMIC DNA]</scope>
    <source>
        <strain>cv. Columbia</strain>
    </source>
</reference>
<reference key="3">
    <citation type="journal article" date="2017" name="Plant J.">
        <title>Araport11: a complete reannotation of the Arabidopsis thaliana reference genome.</title>
        <authorList>
            <person name="Cheng C.Y."/>
            <person name="Krishnakumar V."/>
            <person name="Chan A.P."/>
            <person name="Thibaud-Nissen F."/>
            <person name="Schobel S."/>
            <person name="Town C.D."/>
        </authorList>
    </citation>
    <scope>GENOME REANNOTATION</scope>
    <source>
        <strain>cv. Columbia</strain>
    </source>
</reference>
<reference key="4">
    <citation type="journal article" date="2003" name="Science">
        <title>Empirical analysis of transcriptional activity in the Arabidopsis genome.</title>
        <authorList>
            <person name="Yamada K."/>
            <person name="Lim J."/>
            <person name="Dale J.M."/>
            <person name="Chen H."/>
            <person name="Shinn P."/>
            <person name="Palm C.J."/>
            <person name="Southwick A.M."/>
            <person name="Wu H.C."/>
            <person name="Kim C.J."/>
            <person name="Nguyen M."/>
            <person name="Pham P.K."/>
            <person name="Cheuk R.F."/>
            <person name="Karlin-Newmann G."/>
            <person name="Liu S.X."/>
            <person name="Lam B."/>
            <person name="Sakano H."/>
            <person name="Wu T."/>
            <person name="Yu G."/>
            <person name="Miranda M."/>
            <person name="Quach H.L."/>
            <person name="Tripp M."/>
            <person name="Chang C.H."/>
            <person name="Lee J.M."/>
            <person name="Toriumi M.J."/>
            <person name="Chan M.M."/>
            <person name="Tang C.C."/>
            <person name="Onodera C.S."/>
            <person name="Deng J.M."/>
            <person name="Akiyama K."/>
            <person name="Ansari Y."/>
            <person name="Arakawa T."/>
            <person name="Banh J."/>
            <person name="Banno F."/>
            <person name="Bowser L."/>
            <person name="Brooks S.Y."/>
            <person name="Carninci P."/>
            <person name="Chao Q."/>
            <person name="Choy N."/>
            <person name="Enju A."/>
            <person name="Goldsmith A.D."/>
            <person name="Gurjal M."/>
            <person name="Hansen N.F."/>
            <person name="Hayashizaki Y."/>
            <person name="Johnson-Hopson C."/>
            <person name="Hsuan V.W."/>
            <person name="Iida K."/>
            <person name="Karnes M."/>
            <person name="Khan S."/>
            <person name="Koesema E."/>
            <person name="Ishida J."/>
            <person name="Jiang P.X."/>
            <person name="Jones T."/>
            <person name="Kawai J."/>
            <person name="Kamiya A."/>
            <person name="Meyers C."/>
            <person name="Nakajima M."/>
            <person name="Narusaka M."/>
            <person name="Seki M."/>
            <person name="Sakurai T."/>
            <person name="Satou M."/>
            <person name="Tamse R."/>
            <person name="Vaysberg M."/>
            <person name="Wallender E.K."/>
            <person name="Wong C."/>
            <person name="Yamamura Y."/>
            <person name="Yuan S."/>
            <person name="Shinozaki K."/>
            <person name="Davis R.W."/>
            <person name="Theologis A."/>
            <person name="Ecker J.R."/>
        </authorList>
    </citation>
    <scope>NUCLEOTIDE SEQUENCE [LARGE SCALE MRNA]</scope>
    <source>
        <strain>cv. Columbia</strain>
    </source>
</reference>
<reference key="5">
    <citation type="submission" date="2005-03" db="EMBL/GenBank/DDBJ databases">
        <title>Large-scale analysis of RIKEN Arabidopsis full-length (RAFL) cDNAs.</title>
        <authorList>
            <person name="Totoki Y."/>
            <person name="Seki M."/>
            <person name="Ishida J."/>
            <person name="Nakajima M."/>
            <person name="Enju A."/>
            <person name="Kamiya A."/>
            <person name="Narusaka M."/>
            <person name="Shin-i T."/>
            <person name="Nakagawa M."/>
            <person name="Sakamoto N."/>
            <person name="Oishi K."/>
            <person name="Kohara Y."/>
            <person name="Kobayashi M."/>
            <person name="Toyoda A."/>
            <person name="Sakaki Y."/>
            <person name="Sakurai T."/>
            <person name="Iida K."/>
            <person name="Akiyama K."/>
            <person name="Satou M."/>
            <person name="Toyoda T."/>
            <person name="Konagaya A."/>
            <person name="Carninci P."/>
            <person name="Kawai J."/>
            <person name="Hayashizaki Y."/>
            <person name="Shinozaki K."/>
        </authorList>
    </citation>
    <scope>NUCLEOTIDE SEQUENCE [LARGE SCALE MRNA] OF 287-466</scope>
    <source>
        <strain>cv. Columbia</strain>
    </source>
</reference>
<reference key="6">
    <citation type="journal article" date="2001" name="Cell Stress Chaperones">
        <title>Arabidopsis and the heat stress transcription factor world: how many heat stress transcription factors do we need?</title>
        <authorList>
            <person name="Nover L."/>
            <person name="Bharti K."/>
            <person name="Doering P."/>
            <person name="Mishra S.K."/>
            <person name="Ganguli A."/>
            <person name="Scharf K.-D."/>
        </authorList>
    </citation>
    <scope>GENE FAMILY</scope>
    <scope>NOMENCLATURE</scope>
    <scope>DOMAIN AHA</scope>
</reference>
<reference key="7">
    <citation type="journal article" date="2008" name="J. Genet. Genomics">
        <title>Genome-wide analysis of heat shock transcription factor families in rice and Arabidopsis.</title>
        <authorList>
            <person name="Guo J."/>
            <person name="Wu J."/>
            <person name="Ji Q."/>
            <person name="Wang C."/>
            <person name="Luo L."/>
            <person name="Yuan Y."/>
            <person name="Wang Y."/>
            <person name="Wang J."/>
        </authorList>
    </citation>
    <scope>GENE FAMILY</scope>
    <scope>NOMENCLATURE</scope>
</reference>
<evidence type="ECO:0000250" key="1"/>
<evidence type="ECO:0000255" key="2"/>
<evidence type="ECO:0000256" key="3">
    <source>
        <dbReference type="SAM" id="MobiDB-lite"/>
    </source>
</evidence>
<evidence type="ECO:0000269" key="4">
    <source>
    </source>
</evidence>
<evidence type="ECO:0000305" key="5"/>
<sequence length="466" mass="52355">MNGALGNSSASVSGGEGAGGPAPFLVKTYEMVDDSSTDQIVSWSANNNSFIVWNHAEFSRLLLPTYFKHNNFSSFIRQLNTYGFRKIDPERWEFLNDDFIKDQKHLLKNIHRRKPIHSHSHPPASSTDQERAVLQEQMDKLSREKAAIEAKLLKFKQQKVVAKHQFEEMTEHVDDMENRQKKLLNFLETAIRNPTFVKNFGKKVEQLDISAYNKKRRLPEVEQSKPPSEDSHLDNSSGSSRRESGNIFHQNFSNKLRLELSPADSDMNMVSHSIQSSNEEGASPKGILSGGDPNTTLTKREGLPFAPEALELADTGTCPRRLLLNDNTRVETLQQRLTSSEETDGSFSCHLNLTLASAPLPDKTASQIAKTTLKSQELNFNSIETSASEKNRGRQEIAVGGSQANAAPPARVNDVFWEQFLTERPGSSDNEEASSTYRGNPYEEQEEKRNGSMMLRNTKNIEQLTL</sequence>
<organism>
    <name type="scientific">Arabidopsis thaliana</name>
    <name type="common">Mouse-ear cress</name>
    <dbReference type="NCBI Taxonomy" id="3702"/>
    <lineage>
        <taxon>Eukaryota</taxon>
        <taxon>Viridiplantae</taxon>
        <taxon>Streptophyta</taxon>
        <taxon>Embryophyta</taxon>
        <taxon>Tracheophyta</taxon>
        <taxon>Spermatophyta</taxon>
        <taxon>Magnoliopsida</taxon>
        <taxon>eudicotyledons</taxon>
        <taxon>Gunneridae</taxon>
        <taxon>Pentapetalae</taxon>
        <taxon>rosids</taxon>
        <taxon>malvids</taxon>
        <taxon>Brassicales</taxon>
        <taxon>Brassicaceae</taxon>
        <taxon>Camelineae</taxon>
        <taxon>Arabidopsis</taxon>
    </lineage>
</organism>